<proteinExistence type="inferred from homology"/>
<dbReference type="EC" id="2.7.4.9" evidence="1"/>
<dbReference type="EMBL" id="CP000901">
    <property type="protein sequence ID" value="ABX87970.1"/>
    <property type="molecule type" value="Genomic_DNA"/>
</dbReference>
<dbReference type="RefSeq" id="WP_002213082.1">
    <property type="nucleotide sequence ID" value="NZ_CP009935.1"/>
</dbReference>
<dbReference type="SMR" id="A9R3P0"/>
<dbReference type="GeneID" id="57976966"/>
<dbReference type="KEGG" id="ypg:YpAngola_A3493"/>
<dbReference type="PATRIC" id="fig|349746.12.peg.183"/>
<dbReference type="GO" id="GO:0005829">
    <property type="term" value="C:cytosol"/>
    <property type="evidence" value="ECO:0007669"/>
    <property type="project" value="TreeGrafter"/>
</dbReference>
<dbReference type="GO" id="GO:0005524">
    <property type="term" value="F:ATP binding"/>
    <property type="evidence" value="ECO:0007669"/>
    <property type="project" value="UniProtKB-UniRule"/>
</dbReference>
<dbReference type="GO" id="GO:0004798">
    <property type="term" value="F:dTMP kinase activity"/>
    <property type="evidence" value="ECO:0007669"/>
    <property type="project" value="UniProtKB-UniRule"/>
</dbReference>
<dbReference type="GO" id="GO:0006233">
    <property type="term" value="P:dTDP biosynthetic process"/>
    <property type="evidence" value="ECO:0007669"/>
    <property type="project" value="InterPro"/>
</dbReference>
<dbReference type="GO" id="GO:0006235">
    <property type="term" value="P:dTTP biosynthetic process"/>
    <property type="evidence" value="ECO:0007669"/>
    <property type="project" value="UniProtKB-UniRule"/>
</dbReference>
<dbReference type="GO" id="GO:0006227">
    <property type="term" value="P:dUDP biosynthetic process"/>
    <property type="evidence" value="ECO:0007669"/>
    <property type="project" value="TreeGrafter"/>
</dbReference>
<dbReference type="CDD" id="cd01672">
    <property type="entry name" value="TMPK"/>
    <property type="match status" value="1"/>
</dbReference>
<dbReference type="FunFam" id="3.40.50.300:FF:000321">
    <property type="entry name" value="Thymidylate kinase"/>
    <property type="match status" value="1"/>
</dbReference>
<dbReference type="Gene3D" id="3.40.50.300">
    <property type="entry name" value="P-loop containing nucleotide triphosphate hydrolases"/>
    <property type="match status" value="1"/>
</dbReference>
<dbReference type="HAMAP" id="MF_00165">
    <property type="entry name" value="Thymidylate_kinase"/>
    <property type="match status" value="1"/>
</dbReference>
<dbReference type="InterPro" id="IPR027417">
    <property type="entry name" value="P-loop_NTPase"/>
</dbReference>
<dbReference type="InterPro" id="IPR039430">
    <property type="entry name" value="Thymidylate_kin-like_dom"/>
</dbReference>
<dbReference type="InterPro" id="IPR018095">
    <property type="entry name" value="Thymidylate_kin_CS"/>
</dbReference>
<dbReference type="InterPro" id="IPR018094">
    <property type="entry name" value="Thymidylate_kinase"/>
</dbReference>
<dbReference type="NCBIfam" id="TIGR00041">
    <property type="entry name" value="DTMP_kinase"/>
    <property type="match status" value="1"/>
</dbReference>
<dbReference type="PANTHER" id="PTHR10344">
    <property type="entry name" value="THYMIDYLATE KINASE"/>
    <property type="match status" value="1"/>
</dbReference>
<dbReference type="PANTHER" id="PTHR10344:SF4">
    <property type="entry name" value="UMP-CMP KINASE 2, MITOCHONDRIAL"/>
    <property type="match status" value="1"/>
</dbReference>
<dbReference type="Pfam" id="PF02223">
    <property type="entry name" value="Thymidylate_kin"/>
    <property type="match status" value="1"/>
</dbReference>
<dbReference type="SUPFAM" id="SSF52540">
    <property type="entry name" value="P-loop containing nucleoside triphosphate hydrolases"/>
    <property type="match status" value="1"/>
</dbReference>
<dbReference type="PROSITE" id="PS01331">
    <property type="entry name" value="THYMIDYLATE_KINASE"/>
    <property type="match status" value="1"/>
</dbReference>
<feature type="chain" id="PRO_1000097448" description="Thymidylate kinase">
    <location>
        <begin position="1"/>
        <end position="212"/>
    </location>
</feature>
<feature type="binding site" evidence="1">
    <location>
        <begin position="10"/>
        <end position="17"/>
    </location>
    <ligand>
        <name>ATP</name>
        <dbReference type="ChEBI" id="CHEBI:30616"/>
    </ligand>
</feature>
<comment type="function">
    <text evidence="1">Phosphorylation of dTMP to form dTDP in both de novo and salvage pathways of dTTP synthesis.</text>
</comment>
<comment type="catalytic activity">
    <reaction evidence="1">
        <text>dTMP + ATP = dTDP + ADP</text>
        <dbReference type="Rhea" id="RHEA:13517"/>
        <dbReference type="ChEBI" id="CHEBI:30616"/>
        <dbReference type="ChEBI" id="CHEBI:58369"/>
        <dbReference type="ChEBI" id="CHEBI:63528"/>
        <dbReference type="ChEBI" id="CHEBI:456216"/>
        <dbReference type="EC" id="2.7.4.9"/>
    </reaction>
</comment>
<comment type="similarity">
    <text evidence="1">Belongs to the thymidylate kinase family.</text>
</comment>
<reference key="1">
    <citation type="journal article" date="2010" name="J. Bacteriol.">
        <title>Genome sequence of the deep-rooted Yersinia pestis strain Angola reveals new insights into the evolution and pangenome of the plague bacterium.</title>
        <authorList>
            <person name="Eppinger M."/>
            <person name="Worsham P.L."/>
            <person name="Nikolich M.P."/>
            <person name="Riley D.R."/>
            <person name="Sebastian Y."/>
            <person name="Mou S."/>
            <person name="Achtman M."/>
            <person name="Lindler L.E."/>
            <person name="Ravel J."/>
        </authorList>
    </citation>
    <scope>NUCLEOTIDE SEQUENCE [LARGE SCALE GENOMIC DNA]</scope>
    <source>
        <strain>Angola</strain>
    </source>
</reference>
<evidence type="ECO:0000255" key="1">
    <source>
        <dbReference type="HAMAP-Rule" id="MF_00165"/>
    </source>
</evidence>
<protein>
    <recommendedName>
        <fullName evidence="1">Thymidylate kinase</fullName>
        <ecNumber evidence="1">2.7.4.9</ecNumber>
    </recommendedName>
    <alternativeName>
        <fullName evidence="1">dTMP kinase</fullName>
    </alternativeName>
</protein>
<name>KTHY_YERPG</name>
<organism>
    <name type="scientific">Yersinia pestis bv. Antiqua (strain Angola)</name>
    <dbReference type="NCBI Taxonomy" id="349746"/>
    <lineage>
        <taxon>Bacteria</taxon>
        <taxon>Pseudomonadati</taxon>
        <taxon>Pseudomonadota</taxon>
        <taxon>Gammaproteobacteria</taxon>
        <taxon>Enterobacterales</taxon>
        <taxon>Yersiniaceae</taxon>
        <taxon>Yersinia</taxon>
    </lineage>
</organism>
<accession>A9R3P0</accession>
<keyword id="KW-0067">ATP-binding</keyword>
<keyword id="KW-0418">Kinase</keyword>
<keyword id="KW-0545">Nucleotide biosynthesis</keyword>
<keyword id="KW-0547">Nucleotide-binding</keyword>
<keyword id="KW-0808">Transferase</keyword>
<sequence length="212" mass="23088">MNSKFIVIEGLEGAGKTTTRDTVVAVLRAQGINDIVFTREPGGTPLAEKLRDLIKQGIDGEVLTDKAEVLMLYAARVQLVENVIKPALARGSWVVGDRHDLSSQAYQGGGRGIDSQLMASLRDTVLGEFRPDLTLYLDLPPAVGLARARARGELDRIEQESLAFFERTRARYLELAASDASIKTIDASQPIEQVSASISQALAQWLTNQEPV</sequence>
<gene>
    <name evidence="1" type="primary">tmk</name>
    <name type="ordered locus">YpAngola_A3493</name>
</gene>